<evidence type="ECO:0000255" key="1">
    <source>
        <dbReference type="HAMAP-Rule" id="MF_00808"/>
    </source>
</evidence>
<evidence type="ECO:0000269" key="2">
    <source>
    </source>
</evidence>
<evidence type="ECO:0000305" key="3">
    <source>
    </source>
</evidence>
<sequence length="38" mass="4382">MEALVYTFLLVSTLGIIFFAIFFREPPKVPPTPTKRIK</sequence>
<geneLocation type="chloroplast"/>
<accession>P69669</accession>
<accession>A1E9L7</accession>
<accession>P37260</accession>
<gene>
    <name evidence="1" type="primary">psbT</name>
    <name type="synonym">ycf8</name>
</gene>
<comment type="function">
    <text evidence="1">Found at the monomer-monomer interface of the photosystem II (PS II) dimer, plays a role in assembly and dimerization of PSII. PSII is a light-driven water plastoquinone oxidoreductase, using light energy to abstract electrons from H(2)O, generating a proton gradient subsequently used for ATP formation.</text>
</comment>
<comment type="subunit">
    <text evidence="1 2">PSII is composed of 1 copy each of membrane proteins PsbA, PsbB, PsbC, PsbD, PsbE, PsbF, PsbH, PsbI, PsbJ, PsbK, PsbL, PsbM, PsbT, PsbY, PsbZ, Psb30/Ycf12, at least 3 peripheral proteins of the oxygen-evolving complex and a large number of cofactors. It forms dimeric complexes. Detected in both etioplasts and green leaves; PSII is only assembled in green leaves (PubMed:19137553).</text>
</comment>
<comment type="subcellular location">
    <subcellularLocation>
        <location evidence="1 3">Plastid</location>
        <location evidence="1 3">Chloroplast thylakoid membrane</location>
        <topology evidence="1 3">Single-pass membrane protein</topology>
    </subcellularLocation>
</comment>
<comment type="similarity">
    <text evidence="1">Belongs to the PsbT family.</text>
</comment>
<proteinExistence type="evidence at protein level"/>
<feature type="chain" id="PRO_0000217937" description="Photosystem II reaction center protein T">
    <location>
        <begin position="1"/>
        <end position="38"/>
    </location>
</feature>
<feature type="transmembrane region" description="Helical" evidence="1">
    <location>
        <begin position="3"/>
        <end position="23"/>
    </location>
</feature>
<keyword id="KW-0150">Chloroplast</keyword>
<keyword id="KW-0472">Membrane</keyword>
<keyword id="KW-0602">Photosynthesis</keyword>
<keyword id="KW-0604">Photosystem II</keyword>
<keyword id="KW-0934">Plastid</keyword>
<keyword id="KW-0793">Thylakoid</keyword>
<keyword id="KW-0812">Transmembrane</keyword>
<keyword id="KW-1133">Transmembrane helix</keyword>
<organism>
    <name type="scientific">Hordeum vulgare</name>
    <name type="common">Barley</name>
    <dbReference type="NCBI Taxonomy" id="4513"/>
    <lineage>
        <taxon>Eukaryota</taxon>
        <taxon>Viridiplantae</taxon>
        <taxon>Streptophyta</taxon>
        <taxon>Embryophyta</taxon>
        <taxon>Tracheophyta</taxon>
        <taxon>Spermatophyta</taxon>
        <taxon>Magnoliopsida</taxon>
        <taxon>Liliopsida</taxon>
        <taxon>Poales</taxon>
        <taxon>Poaceae</taxon>
        <taxon>BOP clade</taxon>
        <taxon>Pooideae</taxon>
        <taxon>Triticodae</taxon>
        <taxon>Triticeae</taxon>
        <taxon>Hordeinae</taxon>
        <taxon>Hordeum</taxon>
    </lineage>
</organism>
<dbReference type="EMBL" id="X14107">
    <property type="status" value="NOT_ANNOTATED_CDS"/>
    <property type="molecule type" value="Genomic_DNA"/>
</dbReference>
<dbReference type="EMBL" id="EF115541">
    <property type="protein sequence ID" value="ABK79438.1"/>
    <property type="molecule type" value="Genomic_DNA"/>
</dbReference>
<dbReference type="PIR" id="JN0418">
    <property type="entry name" value="JN0418"/>
</dbReference>
<dbReference type="RefSeq" id="YP_010144451.1">
    <property type="nucleotide sequence ID" value="NC_056985.1"/>
</dbReference>
<dbReference type="RefSeq" id="YP_874679.1">
    <property type="nucleotide sequence ID" value="NC_008590.1"/>
</dbReference>
<dbReference type="SMR" id="P69669"/>
<dbReference type="GeneID" id="4525076"/>
<dbReference type="GeneID" id="67140651"/>
<dbReference type="GO" id="GO:0009535">
    <property type="term" value="C:chloroplast thylakoid membrane"/>
    <property type="evidence" value="ECO:0007669"/>
    <property type="project" value="UniProtKB-SubCell"/>
</dbReference>
<dbReference type="GO" id="GO:0009539">
    <property type="term" value="C:photosystem II reaction center"/>
    <property type="evidence" value="ECO:0007669"/>
    <property type="project" value="InterPro"/>
</dbReference>
<dbReference type="GO" id="GO:0015979">
    <property type="term" value="P:photosynthesis"/>
    <property type="evidence" value="ECO:0007669"/>
    <property type="project" value="UniProtKB-UniRule"/>
</dbReference>
<dbReference type="HAMAP" id="MF_00808">
    <property type="entry name" value="PSII_PsbT"/>
    <property type="match status" value="1"/>
</dbReference>
<dbReference type="InterPro" id="IPR001743">
    <property type="entry name" value="PSII_PsbT"/>
</dbReference>
<dbReference type="InterPro" id="IPR037268">
    <property type="entry name" value="PSII_PsbT_sf"/>
</dbReference>
<dbReference type="PANTHER" id="PTHR36411">
    <property type="match status" value="1"/>
</dbReference>
<dbReference type="PANTHER" id="PTHR36411:SF2">
    <property type="entry name" value="PHOTOSYSTEM II REACTION CENTER PROTEIN T"/>
    <property type="match status" value="1"/>
</dbReference>
<dbReference type="Pfam" id="PF01405">
    <property type="entry name" value="PsbT"/>
    <property type="match status" value="1"/>
</dbReference>
<dbReference type="SUPFAM" id="SSF161029">
    <property type="entry name" value="Photosystem II reaction center protein T, PsbT"/>
    <property type="match status" value="1"/>
</dbReference>
<reference key="1">
    <citation type="journal article" date="1989" name="Nucleic Acids Res.">
        <title>Nucleotide sequence of the 5.2 kbp barley chloroplast DNA fragment, containing psbB-psbH-petB-petD gene cluster.</title>
        <authorList>
            <person name="Andreeva A.V."/>
            <person name="Buryakova A.A."/>
            <person name="Reverdatto S.V."/>
            <person name="Chakhmakhcheva O.G."/>
            <person name="Efimov V.A."/>
        </authorList>
    </citation>
    <scope>NUCLEOTIDE SEQUENCE [GENOMIC DNA]</scope>
    <source>
        <strain>cv. Sabarlis</strain>
    </source>
</reference>
<reference key="2">
    <citation type="journal article" date="1991" name="Bioorg. Khim.">
        <title>Photosystem II of rye. Nucleotide sequence of the psbB, psbC, psbE, psbF, psbH genes of rye and chloroplast DNA regions adjacent to them.</title>
        <authorList>
            <person name="Efimov V.A."/>
            <person name="Andreeva A.V."/>
            <person name="Reverdatto S.V."/>
            <person name="Chakhmakhcheva O.G."/>
        </authorList>
    </citation>
    <scope>NUCLEOTIDE SEQUENCE [GENOMIC DNA]</scope>
    <source>
        <strain>cv. Sabarlis</strain>
    </source>
</reference>
<reference key="3">
    <citation type="journal article" date="2007" name="Theor. Appl. Genet.">
        <title>Complete chloroplast genome sequences of Hordeum vulgare, Sorghum bicolor and Agrostis stolonifera, and comparative analyses with other grass genomes.</title>
        <authorList>
            <person name="Saski C."/>
            <person name="Lee S.-B."/>
            <person name="Fjellheim S."/>
            <person name="Guda C."/>
            <person name="Jansen R.K."/>
            <person name="Luo H."/>
            <person name="Tomkins J."/>
            <person name="Rognli O.A."/>
            <person name="Daniell H."/>
            <person name="Clarke J.L."/>
        </authorList>
    </citation>
    <scope>NUCLEOTIDE SEQUENCE [LARGE SCALE GENOMIC DNA]</scope>
    <source>
        <strain>cv. Morex</strain>
    </source>
</reference>
<reference key="4">
    <citation type="journal article" date="2009" name="Proteomics">
        <title>Mass spectrometric characterization of membrane integral low molecular weight proteins from photosystem II in barley etioplasts.</title>
        <authorList>
            <person name="Ploescher M."/>
            <person name="Granvogl B."/>
            <person name="Zoryan M."/>
            <person name="Reisinger V."/>
            <person name="Eichacker L.A."/>
        </authorList>
    </citation>
    <scope>IDENTIFICATION BY MASS SPECTROMETRY</scope>
    <scope>SUBCELLULAR LOCATION</scope>
    <source>
        <strain>cv. Steffi</strain>
    </source>
</reference>
<name>PSBT_HORVU</name>
<protein>
    <recommendedName>
        <fullName evidence="1">Photosystem II reaction center protein T</fullName>
        <shortName evidence="1">PSII-T</shortName>
    </recommendedName>
</protein>